<accession>Q5X7N0</accession>
<feature type="chain" id="PRO_0000122067" description="Serine--tRNA ligase">
    <location>
        <begin position="1"/>
        <end position="426"/>
    </location>
</feature>
<feature type="binding site" evidence="1">
    <location>
        <begin position="231"/>
        <end position="233"/>
    </location>
    <ligand>
        <name>L-serine</name>
        <dbReference type="ChEBI" id="CHEBI:33384"/>
    </ligand>
</feature>
<feature type="binding site" evidence="1">
    <location>
        <begin position="262"/>
        <end position="264"/>
    </location>
    <ligand>
        <name>ATP</name>
        <dbReference type="ChEBI" id="CHEBI:30616"/>
    </ligand>
</feature>
<feature type="binding site" evidence="1">
    <location>
        <position position="285"/>
    </location>
    <ligand>
        <name>L-serine</name>
        <dbReference type="ChEBI" id="CHEBI:33384"/>
    </ligand>
</feature>
<feature type="binding site" evidence="1">
    <location>
        <begin position="349"/>
        <end position="352"/>
    </location>
    <ligand>
        <name>ATP</name>
        <dbReference type="ChEBI" id="CHEBI:30616"/>
    </ligand>
</feature>
<feature type="binding site" evidence="1">
    <location>
        <position position="385"/>
    </location>
    <ligand>
        <name>L-serine</name>
        <dbReference type="ChEBI" id="CHEBI:33384"/>
    </ligand>
</feature>
<keyword id="KW-0030">Aminoacyl-tRNA synthetase</keyword>
<keyword id="KW-0067">ATP-binding</keyword>
<keyword id="KW-0963">Cytoplasm</keyword>
<keyword id="KW-0436">Ligase</keyword>
<keyword id="KW-0547">Nucleotide-binding</keyword>
<keyword id="KW-0648">Protein biosynthesis</keyword>
<protein>
    <recommendedName>
        <fullName evidence="1">Serine--tRNA ligase</fullName>
        <ecNumber evidence="1">6.1.1.11</ecNumber>
    </recommendedName>
    <alternativeName>
        <fullName evidence="1">Seryl-tRNA synthetase</fullName>
        <shortName evidence="1">SerRS</shortName>
    </alternativeName>
    <alternativeName>
        <fullName evidence="1">Seryl-tRNA(Ser/Sec) synthetase</fullName>
    </alternativeName>
</protein>
<evidence type="ECO:0000255" key="1">
    <source>
        <dbReference type="HAMAP-Rule" id="MF_00176"/>
    </source>
</evidence>
<gene>
    <name evidence="1" type="primary">serS</name>
    <name type="ordered locus">lpp0575</name>
</gene>
<sequence>MLDNQLLRENPQYVATQLLKRGFQFDAVTFSQLEEKRKALQVSTQSLQNERNLRSKAIGEAKSRGENIEPMREEVNKLGAKLEQQKTELDEILKQIEVISLSLPNIPHESVPVGKDELDNQEIRKWGDVPAFSFPVKSHDELGEALGQMDFALAAKITGSRFVVMKGHLARLHRALIQFMLDIHIQQHGYQEIYVPYIVNADSLLGTGQLPKFEADLFKLTGDNGYYLTSTSEIPVTNTVREMILSAEQLPIRYVCHSPCFRSEAGSYGKDTKGMIRQHQFEKVELVWITKPEDSYNALEQLTQHAEVILQRLNLPYRVVALCTGDIGAGSAKTYDLEVWLPSQNTYREISSCSNMEAFQARRMKARFRNPDTNEIQLVHTLNGSGLAVGRTLVAIMENYQDEHGNIHIPDALKPYLGGIDIISVK</sequence>
<name>SYS_LEGPA</name>
<organism>
    <name type="scientific">Legionella pneumophila (strain Paris)</name>
    <dbReference type="NCBI Taxonomy" id="297246"/>
    <lineage>
        <taxon>Bacteria</taxon>
        <taxon>Pseudomonadati</taxon>
        <taxon>Pseudomonadota</taxon>
        <taxon>Gammaproteobacteria</taxon>
        <taxon>Legionellales</taxon>
        <taxon>Legionellaceae</taxon>
        <taxon>Legionella</taxon>
    </lineage>
</organism>
<reference key="1">
    <citation type="journal article" date="2004" name="Nat. Genet.">
        <title>Evidence in the Legionella pneumophila genome for exploitation of host cell functions and high genome plasticity.</title>
        <authorList>
            <person name="Cazalet C."/>
            <person name="Rusniok C."/>
            <person name="Brueggemann H."/>
            <person name="Zidane N."/>
            <person name="Magnier A."/>
            <person name="Ma L."/>
            <person name="Tichit M."/>
            <person name="Jarraud S."/>
            <person name="Bouchier C."/>
            <person name="Vandenesch F."/>
            <person name="Kunst F."/>
            <person name="Etienne J."/>
            <person name="Glaser P."/>
            <person name="Buchrieser C."/>
        </authorList>
    </citation>
    <scope>NUCLEOTIDE SEQUENCE [LARGE SCALE GENOMIC DNA]</scope>
    <source>
        <strain>Paris</strain>
    </source>
</reference>
<comment type="function">
    <text evidence="1">Catalyzes the attachment of serine to tRNA(Ser). Is also able to aminoacylate tRNA(Sec) with serine, to form the misacylated tRNA L-seryl-tRNA(Sec), which will be further converted into selenocysteinyl-tRNA(Sec).</text>
</comment>
<comment type="catalytic activity">
    <reaction evidence="1">
        <text>tRNA(Ser) + L-serine + ATP = L-seryl-tRNA(Ser) + AMP + diphosphate + H(+)</text>
        <dbReference type="Rhea" id="RHEA:12292"/>
        <dbReference type="Rhea" id="RHEA-COMP:9669"/>
        <dbReference type="Rhea" id="RHEA-COMP:9703"/>
        <dbReference type="ChEBI" id="CHEBI:15378"/>
        <dbReference type="ChEBI" id="CHEBI:30616"/>
        <dbReference type="ChEBI" id="CHEBI:33019"/>
        <dbReference type="ChEBI" id="CHEBI:33384"/>
        <dbReference type="ChEBI" id="CHEBI:78442"/>
        <dbReference type="ChEBI" id="CHEBI:78533"/>
        <dbReference type="ChEBI" id="CHEBI:456215"/>
        <dbReference type="EC" id="6.1.1.11"/>
    </reaction>
</comment>
<comment type="catalytic activity">
    <reaction evidence="1">
        <text>tRNA(Sec) + L-serine + ATP = L-seryl-tRNA(Sec) + AMP + diphosphate + H(+)</text>
        <dbReference type="Rhea" id="RHEA:42580"/>
        <dbReference type="Rhea" id="RHEA-COMP:9742"/>
        <dbReference type="Rhea" id="RHEA-COMP:10128"/>
        <dbReference type="ChEBI" id="CHEBI:15378"/>
        <dbReference type="ChEBI" id="CHEBI:30616"/>
        <dbReference type="ChEBI" id="CHEBI:33019"/>
        <dbReference type="ChEBI" id="CHEBI:33384"/>
        <dbReference type="ChEBI" id="CHEBI:78442"/>
        <dbReference type="ChEBI" id="CHEBI:78533"/>
        <dbReference type="ChEBI" id="CHEBI:456215"/>
        <dbReference type="EC" id="6.1.1.11"/>
    </reaction>
</comment>
<comment type="pathway">
    <text evidence="1">Aminoacyl-tRNA biosynthesis; selenocysteinyl-tRNA(Sec) biosynthesis; L-seryl-tRNA(Sec) from L-serine and tRNA(Sec): step 1/1.</text>
</comment>
<comment type="subunit">
    <text evidence="1">Homodimer. The tRNA molecule binds across the dimer.</text>
</comment>
<comment type="subcellular location">
    <subcellularLocation>
        <location evidence="1">Cytoplasm</location>
    </subcellularLocation>
</comment>
<comment type="domain">
    <text evidence="1">Consists of two distinct domains, a catalytic core and a N-terminal extension that is involved in tRNA binding.</text>
</comment>
<comment type="similarity">
    <text evidence="1">Belongs to the class-II aminoacyl-tRNA synthetase family. Type-1 seryl-tRNA synthetase subfamily.</text>
</comment>
<dbReference type="EC" id="6.1.1.11" evidence="1"/>
<dbReference type="EMBL" id="CR628336">
    <property type="protein sequence ID" value="CAH11723.1"/>
    <property type="molecule type" value="Genomic_DNA"/>
</dbReference>
<dbReference type="RefSeq" id="WP_011213140.1">
    <property type="nucleotide sequence ID" value="NC_006368.1"/>
</dbReference>
<dbReference type="SMR" id="Q5X7N0"/>
<dbReference type="KEGG" id="lpp:lpp0575"/>
<dbReference type="LegioList" id="lpp0575"/>
<dbReference type="HOGENOM" id="CLU_023797_1_1_6"/>
<dbReference type="UniPathway" id="UPA00906">
    <property type="reaction ID" value="UER00895"/>
</dbReference>
<dbReference type="GO" id="GO:0005737">
    <property type="term" value="C:cytoplasm"/>
    <property type="evidence" value="ECO:0007669"/>
    <property type="project" value="UniProtKB-SubCell"/>
</dbReference>
<dbReference type="GO" id="GO:0005524">
    <property type="term" value="F:ATP binding"/>
    <property type="evidence" value="ECO:0007669"/>
    <property type="project" value="UniProtKB-UniRule"/>
</dbReference>
<dbReference type="GO" id="GO:0004828">
    <property type="term" value="F:serine-tRNA ligase activity"/>
    <property type="evidence" value="ECO:0007669"/>
    <property type="project" value="UniProtKB-UniRule"/>
</dbReference>
<dbReference type="GO" id="GO:0016260">
    <property type="term" value="P:selenocysteine biosynthetic process"/>
    <property type="evidence" value="ECO:0007669"/>
    <property type="project" value="UniProtKB-UniRule"/>
</dbReference>
<dbReference type="GO" id="GO:0006434">
    <property type="term" value="P:seryl-tRNA aminoacylation"/>
    <property type="evidence" value="ECO:0007669"/>
    <property type="project" value="UniProtKB-UniRule"/>
</dbReference>
<dbReference type="CDD" id="cd00770">
    <property type="entry name" value="SerRS_core"/>
    <property type="match status" value="1"/>
</dbReference>
<dbReference type="Gene3D" id="3.30.930.10">
    <property type="entry name" value="Bira Bifunctional Protein, Domain 2"/>
    <property type="match status" value="1"/>
</dbReference>
<dbReference type="Gene3D" id="1.10.287.40">
    <property type="entry name" value="Serine-tRNA synthetase, tRNA binding domain"/>
    <property type="match status" value="1"/>
</dbReference>
<dbReference type="HAMAP" id="MF_00176">
    <property type="entry name" value="Ser_tRNA_synth_type1"/>
    <property type="match status" value="1"/>
</dbReference>
<dbReference type="InterPro" id="IPR002314">
    <property type="entry name" value="aa-tRNA-synt_IIb"/>
</dbReference>
<dbReference type="InterPro" id="IPR006195">
    <property type="entry name" value="aa-tRNA-synth_II"/>
</dbReference>
<dbReference type="InterPro" id="IPR045864">
    <property type="entry name" value="aa-tRNA-synth_II/BPL/LPL"/>
</dbReference>
<dbReference type="InterPro" id="IPR002317">
    <property type="entry name" value="Ser-tRNA-ligase_type_1"/>
</dbReference>
<dbReference type="InterPro" id="IPR015866">
    <property type="entry name" value="Ser-tRNA-synth_1_N"/>
</dbReference>
<dbReference type="InterPro" id="IPR042103">
    <property type="entry name" value="SerRS_1_N_sf"/>
</dbReference>
<dbReference type="InterPro" id="IPR033729">
    <property type="entry name" value="SerRS_core"/>
</dbReference>
<dbReference type="InterPro" id="IPR010978">
    <property type="entry name" value="tRNA-bd_arm"/>
</dbReference>
<dbReference type="NCBIfam" id="TIGR00414">
    <property type="entry name" value="serS"/>
    <property type="match status" value="1"/>
</dbReference>
<dbReference type="PANTHER" id="PTHR43697:SF1">
    <property type="entry name" value="SERINE--TRNA LIGASE"/>
    <property type="match status" value="1"/>
</dbReference>
<dbReference type="PANTHER" id="PTHR43697">
    <property type="entry name" value="SERYL-TRNA SYNTHETASE"/>
    <property type="match status" value="1"/>
</dbReference>
<dbReference type="Pfam" id="PF02403">
    <property type="entry name" value="Seryl_tRNA_N"/>
    <property type="match status" value="1"/>
</dbReference>
<dbReference type="Pfam" id="PF00587">
    <property type="entry name" value="tRNA-synt_2b"/>
    <property type="match status" value="1"/>
</dbReference>
<dbReference type="PIRSF" id="PIRSF001529">
    <property type="entry name" value="Ser-tRNA-synth_IIa"/>
    <property type="match status" value="1"/>
</dbReference>
<dbReference type="PRINTS" id="PR00981">
    <property type="entry name" value="TRNASYNTHSER"/>
</dbReference>
<dbReference type="SUPFAM" id="SSF55681">
    <property type="entry name" value="Class II aaRS and biotin synthetases"/>
    <property type="match status" value="1"/>
</dbReference>
<dbReference type="SUPFAM" id="SSF46589">
    <property type="entry name" value="tRNA-binding arm"/>
    <property type="match status" value="1"/>
</dbReference>
<dbReference type="PROSITE" id="PS50862">
    <property type="entry name" value="AA_TRNA_LIGASE_II"/>
    <property type="match status" value="1"/>
</dbReference>
<proteinExistence type="inferred from homology"/>